<reference key="1">
    <citation type="journal article" date="2005" name="J. Bacteriol.">
        <title>Genomic sequence of an otitis media isolate of nontypeable Haemophilus influenzae: comparative study with H. influenzae serotype d, strain KW20.</title>
        <authorList>
            <person name="Harrison A."/>
            <person name="Dyer D.W."/>
            <person name="Gillaspy A."/>
            <person name="Ray W.C."/>
            <person name="Mungur R."/>
            <person name="Carson M.B."/>
            <person name="Zhong H."/>
            <person name="Gipson J."/>
            <person name="Gipson M."/>
            <person name="Johnson L.S."/>
            <person name="Lewis L."/>
            <person name="Bakaletz L.O."/>
            <person name="Munson R.S. Jr."/>
        </authorList>
    </citation>
    <scope>NUCLEOTIDE SEQUENCE [LARGE SCALE GENOMIC DNA]</scope>
    <source>
        <strain>86-028NP</strain>
    </source>
</reference>
<proteinExistence type="inferred from homology"/>
<feature type="chain" id="PRO_1000145175" description="Urease accessory protein UreG">
    <location>
        <begin position="1"/>
        <end position="225"/>
    </location>
</feature>
<feature type="binding site" evidence="1">
    <location>
        <begin position="25"/>
        <end position="32"/>
    </location>
    <ligand>
        <name>GTP</name>
        <dbReference type="ChEBI" id="CHEBI:37565"/>
    </ligand>
</feature>
<organism>
    <name type="scientific">Haemophilus influenzae (strain 86-028NP)</name>
    <dbReference type="NCBI Taxonomy" id="281310"/>
    <lineage>
        <taxon>Bacteria</taxon>
        <taxon>Pseudomonadati</taxon>
        <taxon>Pseudomonadota</taxon>
        <taxon>Gammaproteobacteria</taxon>
        <taxon>Pasteurellales</taxon>
        <taxon>Pasteurellaceae</taxon>
        <taxon>Haemophilus</taxon>
    </lineage>
</organism>
<comment type="function">
    <text evidence="1">Facilitates the functional incorporation of the urease nickel metallocenter. This process requires GTP hydrolysis, probably effectuated by UreG.</text>
</comment>
<comment type="subunit">
    <text evidence="1">Homodimer. UreD, UreF and UreG form a complex that acts as a GTP-hydrolysis-dependent molecular chaperone, activating the urease apoprotein by helping to assemble the nickel containing metallocenter of UreC. The UreE protein probably delivers the nickel.</text>
</comment>
<comment type="subcellular location">
    <subcellularLocation>
        <location evidence="1">Cytoplasm</location>
    </subcellularLocation>
</comment>
<comment type="similarity">
    <text evidence="1">Belongs to the SIMIBI class G3E GTPase family. UreG subfamily.</text>
</comment>
<name>UREG_HAEI8</name>
<gene>
    <name evidence="1" type="primary">ureG</name>
    <name type="ordered locus">NTHI0662</name>
</gene>
<evidence type="ECO:0000255" key="1">
    <source>
        <dbReference type="HAMAP-Rule" id="MF_01389"/>
    </source>
</evidence>
<sequence length="225" mass="24716">MSNTVATMINKRNIMRNYIKIGVAGPVGAGKTALIEKLTREIASKYSVAVITNDIYTQEDAEFLTKNSLLPPERIMGVETGGCPHTAIREDASMNLEAVDEMVTRFPDVEIVFIESGGDNLSATFSPDLADVTIFVIDVAQGEKIPRKGGPGITRSDLLVINKTDLAPFVGVDLSVMERDARRMRNGQPFIFTNLMKKENLDGVIGWIEKYALLKNVEEPASLVR</sequence>
<protein>
    <recommendedName>
        <fullName evidence="1">Urease accessory protein UreG</fullName>
    </recommendedName>
</protein>
<dbReference type="EMBL" id="CP000057">
    <property type="protein sequence ID" value="AAX87585.1"/>
    <property type="molecule type" value="Genomic_DNA"/>
</dbReference>
<dbReference type="SMR" id="Q4QN12"/>
<dbReference type="KEGG" id="hit:NTHI0662"/>
<dbReference type="HOGENOM" id="CLU_072144_1_0_6"/>
<dbReference type="Proteomes" id="UP000002525">
    <property type="component" value="Chromosome"/>
</dbReference>
<dbReference type="GO" id="GO:0005737">
    <property type="term" value="C:cytoplasm"/>
    <property type="evidence" value="ECO:0007669"/>
    <property type="project" value="UniProtKB-SubCell"/>
</dbReference>
<dbReference type="GO" id="GO:0005525">
    <property type="term" value="F:GTP binding"/>
    <property type="evidence" value="ECO:0007669"/>
    <property type="project" value="UniProtKB-KW"/>
</dbReference>
<dbReference type="GO" id="GO:0003924">
    <property type="term" value="F:GTPase activity"/>
    <property type="evidence" value="ECO:0007669"/>
    <property type="project" value="InterPro"/>
</dbReference>
<dbReference type="GO" id="GO:0016151">
    <property type="term" value="F:nickel cation binding"/>
    <property type="evidence" value="ECO:0007669"/>
    <property type="project" value="UniProtKB-UniRule"/>
</dbReference>
<dbReference type="GO" id="GO:0043419">
    <property type="term" value="P:urea catabolic process"/>
    <property type="evidence" value="ECO:0007669"/>
    <property type="project" value="InterPro"/>
</dbReference>
<dbReference type="CDD" id="cd05540">
    <property type="entry name" value="UreG"/>
    <property type="match status" value="1"/>
</dbReference>
<dbReference type="FunFam" id="3.40.50.300:FF:000208">
    <property type="entry name" value="Urease accessory protein UreG"/>
    <property type="match status" value="1"/>
</dbReference>
<dbReference type="Gene3D" id="3.40.50.300">
    <property type="entry name" value="P-loop containing nucleotide triphosphate hydrolases"/>
    <property type="match status" value="1"/>
</dbReference>
<dbReference type="HAMAP" id="MF_01389">
    <property type="entry name" value="UreG"/>
    <property type="match status" value="1"/>
</dbReference>
<dbReference type="InterPro" id="IPR003495">
    <property type="entry name" value="CobW/HypB/UreG_nucleotide-bd"/>
</dbReference>
<dbReference type="InterPro" id="IPR027417">
    <property type="entry name" value="P-loop_NTPase"/>
</dbReference>
<dbReference type="InterPro" id="IPR004400">
    <property type="entry name" value="UreG"/>
</dbReference>
<dbReference type="NCBIfam" id="TIGR00101">
    <property type="entry name" value="ureG"/>
    <property type="match status" value="1"/>
</dbReference>
<dbReference type="PANTHER" id="PTHR31715">
    <property type="entry name" value="UREASE ACCESSORY PROTEIN G"/>
    <property type="match status" value="1"/>
</dbReference>
<dbReference type="PANTHER" id="PTHR31715:SF0">
    <property type="entry name" value="UREASE ACCESSORY PROTEIN G"/>
    <property type="match status" value="1"/>
</dbReference>
<dbReference type="Pfam" id="PF02492">
    <property type="entry name" value="cobW"/>
    <property type="match status" value="1"/>
</dbReference>
<dbReference type="PIRSF" id="PIRSF005624">
    <property type="entry name" value="Ni-bind_GTPase"/>
    <property type="match status" value="1"/>
</dbReference>
<dbReference type="SUPFAM" id="SSF52540">
    <property type="entry name" value="P-loop containing nucleoside triphosphate hydrolases"/>
    <property type="match status" value="1"/>
</dbReference>
<accession>Q4QN12</accession>
<keyword id="KW-0143">Chaperone</keyword>
<keyword id="KW-0963">Cytoplasm</keyword>
<keyword id="KW-0342">GTP-binding</keyword>
<keyword id="KW-0996">Nickel insertion</keyword>
<keyword id="KW-0547">Nucleotide-binding</keyword>